<organism>
    <name type="scientific">Escherichia phage lambda</name>
    <name type="common">Bacteriophage lambda</name>
    <dbReference type="NCBI Taxonomy" id="2681611"/>
    <lineage>
        <taxon>Viruses</taxon>
        <taxon>Duplodnaviria</taxon>
        <taxon>Heunggongvirae</taxon>
        <taxon>Uroviricota</taxon>
        <taxon>Caudoviricetes</taxon>
        <taxon>Lambdavirus</taxon>
        <taxon>Lambdavirus lambda</taxon>
    </lineage>
</organism>
<feature type="chain" id="PRO_0000077583" description="Antitermination protein N">
    <location>
        <begin position="1"/>
        <end position="107"/>
    </location>
</feature>
<feature type="region of interest" description="Disordered" evidence="1">
    <location>
        <begin position="85"/>
        <end position="107"/>
    </location>
</feature>
<feature type="sequence conflict" description="In Ref. 1; AAA32249." evidence="4" ref="1">
    <original>R</original>
    <variation>L</variation>
    <location>
        <position position="35"/>
    </location>
</feature>
<feature type="helix" evidence="6">
    <location>
        <begin position="3"/>
        <end position="10"/>
    </location>
</feature>
<feature type="helix" evidence="6">
    <location>
        <begin position="12"/>
        <end position="19"/>
    </location>
</feature>
<feature type="helix" evidence="5">
    <location>
        <begin position="23"/>
        <end position="25"/>
    </location>
</feature>
<feature type="strand" evidence="5">
    <location>
        <begin position="26"/>
        <end position="29"/>
    </location>
</feature>
<feature type="turn" evidence="6">
    <location>
        <begin position="32"/>
        <end position="34"/>
    </location>
</feature>
<feature type="helix" evidence="6">
    <location>
        <begin position="47"/>
        <end position="52"/>
    </location>
</feature>
<feature type="helix" evidence="6">
    <location>
        <begin position="58"/>
        <end position="78"/>
    </location>
</feature>
<gene>
    <name type="primary">N</name>
    <name type="ordered locus">lambdap49</name>
</gene>
<evidence type="ECO:0000256" key="1">
    <source>
        <dbReference type="SAM" id="MobiDB-lite"/>
    </source>
</evidence>
<evidence type="ECO:0000269" key="2">
    <source>
    </source>
</evidence>
<evidence type="ECO:0000269" key="3">
    <source>
    </source>
</evidence>
<evidence type="ECO:0000305" key="4"/>
<evidence type="ECO:0007829" key="5">
    <source>
        <dbReference type="PDB" id="1QFQ"/>
    </source>
</evidence>
<evidence type="ECO:0007829" key="6">
    <source>
        <dbReference type="PDB" id="5LM7"/>
    </source>
</evidence>
<comment type="function">
    <text evidence="3">Plays a role as a transcriptional antitermination factor that allows the virus to initiate its lytic phase. Activates expression of the delayed viral early genes by modifying host RNA polymerase (RNAP) into a form that is resistant to termination signals. This antitermination function requires the host NusA protein which serves to stabilize the interaction between antitermination protein N and host RNA polymerase.</text>
</comment>
<comment type="subunit">
    <text evidence="2">Interacts with host nusA.</text>
</comment>
<reference key="1">
    <citation type="journal article" date="1987" name="J. Mol. Biol.">
        <title>Lambda N antitermination system: functional analysis of phage interactions with the host NusA protein.</title>
        <authorList>
            <person name="Schauer A.T."/>
            <person name="Carver D.L."/>
            <person name="Bigelow B."/>
            <person name="Baron L.S."/>
            <person name="Friedman D.I."/>
        </authorList>
    </citation>
    <scope>NUCLEOTIDE SEQUENCE [GENOMIC DNA]</scope>
</reference>
<reference key="2">
    <citation type="journal article" date="1982" name="J. Mol. Biol.">
        <title>Nucleotide sequence of bacteriophage lambda DNA.</title>
        <authorList>
            <person name="Sanger F."/>
            <person name="Coulson A.R."/>
            <person name="Hong G.F."/>
            <person name="Hill D.F."/>
            <person name="Petersen G.B."/>
        </authorList>
    </citation>
    <scope>NUCLEOTIDE SEQUENCE [LARGE SCALE GENOMIC DNA]</scope>
</reference>
<reference key="3">
    <citation type="journal article" date="1981" name="Nucleic Acids Res.">
        <title>The DNA sequence of the phage lambda genome between PL and the gene bet.</title>
        <authorList>
            <person name="Ineichen K."/>
            <person name="Shepherd J.C.W."/>
            <person name="Bickle T.A."/>
        </authorList>
    </citation>
    <scope>NUCLEOTIDE SEQUENCE [GENOMIC DNA]</scope>
</reference>
<reference key="4">
    <citation type="journal article" date="1979" name="Gene">
        <title>The N protein of bacteriophage lambda, defined by its DNA sequence, is highly basic.</title>
        <authorList>
            <person name="Franklin N.C."/>
            <person name="Bennett G.N."/>
        </authorList>
    </citation>
    <scope>NUCLEOTIDE SEQUENCE [GENOMIC DNA]</scope>
</reference>
<reference key="5">
    <citation type="journal article" date="1999" name="Mol. Microbiol.">
        <title>Functional importance of regions in Escherichia coli elongation factor NusA that interact with RNA polymerase, the bacteriophage lambda N protein and RNA.</title>
        <authorList>
            <person name="Mah T.F."/>
            <person name="Li J."/>
            <person name="Davidson A.R."/>
            <person name="Greenblatt J."/>
        </authorList>
    </citation>
    <scope>INTERACTION WITH HOST NUSA</scope>
</reference>
<reference key="6">
    <citation type="journal article" date="2002" name="Genes Cells">
        <title>Transcription termination and anti-termination in E. coli.</title>
        <authorList>
            <person name="Nudler E."/>
            <person name="Gottesman M.E."/>
        </authorList>
    </citation>
    <scope>REVIEW ON FUNCTION</scope>
</reference>
<reference key="7">
    <citation type="journal article" date="2014" name="Nucleic Acids Res.">
        <title>Bacteriophage lambda N protein inhibits transcription slippage by Escherichia coli RNA polymerase.</title>
        <authorList>
            <person name="Parks A.R."/>
            <person name="Court C."/>
            <person name="Lubkowska L."/>
            <person name="Jin D.J."/>
            <person name="Kashlev M."/>
            <person name="Court D.L."/>
        </authorList>
    </citation>
    <scope>FUNCTION</scope>
</reference>
<reference key="8">
    <citation type="journal article" date="2000" name="Eur. J. Biochem.">
        <title>Antitermination in bacteriophage lambda. The structure of the N36 peptide-boxB RNA complex.</title>
        <authorList>
            <person name="Scharpf M."/>
            <person name="Sticht H."/>
            <person name="Schweimer K."/>
            <person name="Boehm M."/>
            <person name="Hoffmann S."/>
            <person name="Rosch P."/>
        </authorList>
    </citation>
    <scope>STRUCTURE BY NMR OF 2-34</scope>
</reference>
<name>REGN_LAMBD</name>
<organismHost>
    <name type="scientific">Escherichia coli</name>
    <dbReference type="NCBI Taxonomy" id="562"/>
</organismHost>
<protein>
    <recommendedName>
        <fullName>Antitermination protein N</fullName>
    </recommendedName>
    <alternativeName>
        <fullName>Regulatory protein N</fullName>
        <shortName>PN</shortName>
    </alternativeName>
</protein>
<sequence>MDAQTRRRERRAEKQAQWKAANPLLVGVSAKPVNRPILSLNRKPKSRVESALNPIDLTVLAEYHKQIESNLQRIERKNQRTWYSKPGERGITCSGRQKIKGKSIPLI</sequence>
<dbReference type="EMBL" id="J02459">
    <property type="protein sequence ID" value="AAA96578.1"/>
    <property type="molecule type" value="Genomic_DNA"/>
</dbReference>
<dbReference type="EMBL" id="M29653">
    <property type="protein sequence ID" value="AAA32249.1"/>
    <property type="molecule type" value="Genomic_DNA"/>
</dbReference>
<dbReference type="PIR" id="D94614">
    <property type="entry name" value="VNBPL"/>
</dbReference>
<dbReference type="RefSeq" id="NP_040625.1">
    <property type="nucleotide sequence ID" value="NC_001416.1"/>
</dbReference>
<dbReference type="PDB" id="1QFQ">
    <property type="method" value="NMR"/>
    <property type="chains" value="B=2-36"/>
</dbReference>
<dbReference type="PDB" id="5LM7">
    <property type="method" value="X-ray"/>
    <property type="resolution" value="3.35 A"/>
    <property type="chains" value="F/N=1-84"/>
</dbReference>
<dbReference type="PDB" id="5MS0">
    <property type="method" value="EM"/>
    <property type="resolution" value="9.80 A"/>
    <property type="chains" value="N=3-86"/>
</dbReference>
<dbReference type="PDB" id="6GOV">
    <property type="method" value="EM"/>
    <property type="resolution" value="3.70 A"/>
    <property type="chains" value="N=1-107"/>
</dbReference>
<dbReference type="PDBsum" id="1QFQ"/>
<dbReference type="PDBsum" id="5LM7"/>
<dbReference type="PDBsum" id="5MS0"/>
<dbReference type="PDBsum" id="6GOV"/>
<dbReference type="EMDB" id="EMD-3561"/>
<dbReference type="SMR" id="P03045"/>
<dbReference type="ComplexPortal" id="CPX-5780">
    <property type="entry name" value="lambdaN-dependent processive transcription antitermination complex"/>
</dbReference>
<dbReference type="IntAct" id="P03045">
    <property type="interactions" value="7"/>
</dbReference>
<dbReference type="GeneID" id="2703540"/>
<dbReference type="KEGG" id="vg:2703540"/>
<dbReference type="EvolutionaryTrace" id="P03045"/>
<dbReference type="Proteomes" id="UP000001711">
    <property type="component" value="Genome"/>
</dbReference>
<dbReference type="GO" id="GO:0001000">
    <property type="term" value="F:bacterial-type RNA polymerase core enzyme binding"/>
    <property type="evidence" value="ECO:0000315"/>
    <property type="project" value="CAFA"/>
</dbReference>
<dbReference type="GO" id="GO:0003677">
    <property type="term" value="F:DNA binding"/>
    <property type="evidence" value="ECO:0007669"/>
    <property type="project" value="UniProtKB-KW"/>
</dbReference>
<dbReference type="GO" id="GO:0003723">
    <property type="term" value="F:RNA binding"/>
    <property type="evidence" value="ECO:0000269"/>
    <property type="project" value="DisProt"/>
</dbReference>
<dbReference type="GO" id="GO:0070063">
    <property type="term" value="F:RNA polymerase binding"/>
    <property type="evidence" value="ECO:0000314"/>
    <property type="project" value="DisProt"/>
</dbReference>
<dbReference type="GO" id="GO:0035613">
    <property type="term" value="F:RNA stem-loop binding"/>
    <property type="evidence" value="ECO:0000315"/>
    <property type="project" value="CAFA"/>
</dbReference>
<dbReference type="GO" id="GO:0003727">
    <property type="term" value="F:single-stranded RNA binding"/>
    <property type="evidence" value="ECO:0000269"/>
    <property type="project" value="DisProt"/>
</dbReference>
<dbReference type="GO" id="GO:0001072">
    <property type="term" value="F:transcription antitermination factor activity, RNA binding"/>
    <property type="evidence" value="ECO:0000315"/>
    <property type="project" value="CAFA"/>
</dbReference>
<dbReference type="GO" id="GO:0006353">
    <property type="term" value="P:DNA-templated transcription termination"/>
    <property type="evidence" value="ECO:0007669"/>
    <property type="project" value="UniProtKB-KW"/>
</dbReference>
<dbReference type="GO" id="GO:0032784">
    <property type="term" value="P:regulation of DNA-templated transcription elongation"/>
    <property type="evidence" value="ECO:0000303"/>
    <property type="project" value="ComplexPortal"/>
</dbReference>
<dbReference type="GO" id="GO:0006357">
    <property type="term" value="P:regulation of transcription by RNA polymerase II"/>
    <property type="evidence" value="ECO:0000314"/>
    <property type="project" value="DisProt"/>
</dbReference>
<dbReference type="GO" id="GO:0031564">
    <property type="term" value="P:transcription antitermination"/>
    <property type="evidence" value="ECO:0000314"/>
    <property type="project" value="ComplexPortal"/>
</dbReference>
<dbReference type="DisProt" id="DP00005"/>
<dbReference type="InterPro" id="IPR020952">
    <property type="entry name" value="Antiterm_prot_N_Arg-rich"/>
</dbReference>
<dbReference type="Pfam" id="PF11438">
    <property type="entry name" value="N36"/>
    <property type="match status" value="1"/>
</dbReference>
<accession>P03045</accession>
<accession>Q38647</accession>
<proteinExistence type="evidence at protein level"/>
<keyword id="KW-0002">3D-structure</keyword>
<keyword id="KW-0238">DNA-binding</keyword>
<keyword id="KW-1185">Reference proteome</keyword>
<keyword id="KW-0804">Transcription</keyword>
<keyword id="KW-0805">Transcription regulation</keyword>
<keyword id="KW-0806">Transcription termination</keyword>